<dbReference type="EC" id="6.3.1.13" evidence="1"/>
<dbReference type="EMBL" id="CR931997">
    <property type="protein sequence ID" value="CAI36520.1"/>
    <property type="molecule type" value="Genomic_DNA"/>
</dbReference>
<dbReference type="RefSeq" id="WP_005296309.1">
    <property type="nucleotide sequence ID" value="NC_007164.1"/>
</dbReference>
<dbReference type="SMR" id="Q4JXD7"/>
<dbReference type="STRING" id="306537.jk0368"/>
<dbReference type="GeneID" id="92738128"/>
<dbReference type="KEGG" id="cjk:jk0368"/>
<dbReference type="eggNOG" id="COG0215">
    <property type="taxonomic scope" value="Bacteria"/>
</dbReference>
<dbReference type="HOGENOM" id="CLU_013528_0_0_11"/>
<dbReference type="OrthoDB" id="9815130at2"/>
<dbReference type="Proteomes" id="UP000000545">
    <property type="component" value="Chromosome"/>
</dbReference>
<dbReference type="GO" id="GO:0005829">
    <property type="term" value="C:cytosol"/>
    <property type="evidence" value="ECO:0007669"/>
    <property type="project" value="TreeGrafter"/>
</dbReference>
<dbReference type="GO" id="GO:0005524">
    <property type="term" value="F:ATP binding"/>
    <property type="evidence" value="ECO:0007669"/>
    <property type="project" value="UniProtKB-KW"/>
</dbReference>
<dbReference type="GO" id="GO:0035446">
    <property type="term" value="F:cysteine-glucosaminylinositol ligase activity"/>
    <property type="evidence" value="ECO:0007669"/>
    <property type="project" value="UniProtKB-UniRule"/>
</dbReference>
<dbReference type="GO" id="GO:0004817">
    <property type="term" value="F:cysteine-tRNA ligase activity"/>
    <property type="evidence" value="ECO:0007669"/>
    <property type="project" value="TreeGrafter"/>
</dbReference>
<dbReference type="GO" id="GO:0008270">
    <property type="term" value="F:zinc ion binding"/>
    <property type="evidence" value="ECO:0007669"/>
    <property type="project" value="UniProtKB-UniRule"/>
</dbReference>
<dbReference type="GO" id="GO:0006423">
    <property type="term" value="P:cysteinyl-tRNA aminoacylation"/>
    <property type="evidence" value="ECO:0007669"/>
    <property type="project" value="TreeGrafter"/>
</dbReference>
<dbReference type="GO" id="GO:0010125">
    <property type="term" value="P:mycothiol biosynthetic process"/>
    <property type="evidence" value="ECO:0007669"/>
    <property type="project" value="UniProtKB-UniRule"/>
</dbReference>
<dbReference type="Gene3D" id="1.20.120.640">
    <property type="entry name" value="Anticodon-binding domain of a subclass of class I aminoacyl-tRNA synthetases"/>
    <property type="match status" value="1"/>
</dbReference>
<dbReference type="Gene3D" id="3.40.50.620">
    <property type="entry name" value="HUPs"/>
    <property type="match status" value="1"/>
</dbReference>
<dbReference type="HAMAP" id="MF_01697">
    <property type="entry name" value="MshC"/>
    <property type="match status" value="1"/>
</dbReference>
<dbReference type="InterPro" id="IPR024909">
    <property type="entry name" value="Cys-tRNA/MSH_ligase"/>
</dbReference>
<dbReference type="InterPro" id="IPR017812">
    <property type="entry name" value="Mycothiol_ligase_MshC"/>
</dbReference>
<dbReference type="InterPro" id="IPR014729">
    <property type="entry name" value="Rossmann-like_a/b/a_fold"/>
</dbReference>
<dbReference type="InterPro" id="IPR032678">
    <property type="entry name" value="tRNA-synt_1_cat_dom"/>
</dbReference>
<dbReference type="InterPro" id="IPR009080">
    <property type="entry name" value="tRNAsynth_Ia_anticodon-bd"/>
</dbReference>
<dbReference type="NCBIfam" id="TIGR03447">
    <property type="entry name" value="mycothiol_MshC"/>
    <property type="match status" value="1"/>
</dbReference>
<dbReference type="PANTHER" id="PTHR10890:SF3">
    <property type="entry name" value="CYSTEINE--TRNA LIGASE, CYTOPLASMIC"/>
    <property type="match status" value="1"/>
</dbReference>
<dbReference type="PANTHER" id="PTHR10890">
    <property type="entry name" value="CYSTEINYL-TRNA SYNTHETASE"/>
    <property type="match status" value="1"/>
</dbReference>
<dbReference type="Pfam" id="PF01406">
    <property type="entry name" value="tRNA-synt_1e"/>
    <property type="match status" value="1"/>
</dbReference>
<dbReference type="PRINTS" id="PR00983">
    <property type="entry name" value="TRNASYNTHCYS"/>
</dbReference>
<dbReference type="SUPFAM" id="SSF47323">
    <property type="entry name" value="Anticodon-binding domain of a subclass of class I aminoacyl-tRNA synthetases"/>
    <property type="match status" value="1"/>
</dbReference>
<dbReference type="SUPFAM" id="SSF52374">
    <property type="entry name" value="Nucleotidylyl transferase"/>
    <property type="match status" value="1"/>
</dbReference>
<comment type="function">
    <text evidence="1">Catalyzes the ATP-dependent condensation of GlcN-Ins and L-cysteine to form L-Cys-GlcN-Ins.</text>
</comment>
<comment type="catalytic activity">
    <reaction evidence="1">
        <text>1D-myo-inositol 2-amino-2-deoxy-alpha-D-glucopyranoside + L-cysteine + ATP = 1D-myo-inositol 2-(L-cysteinylamino)-2-deoxy-alpha-D-glucopyranoside + AMP + diphosphate + H(+)</text>
        <dbReference type="Rhea" id="RHEA:26176"/>
        <dbReference type="ChEBI" id="CHEBI:15378"/>
        <dbReference type="ChEBI" id="CHEBI:30616"/>
        <dbReference type="ChEBI" id="CHEBI:33019"/>
        <dbReference type="ChEBI" id="CHEBI:35235"/>
        <dbReference type="ChEBI" id="CHEBI:58886"/>
        <dbReference type="ChEBI" id="CHEBI:58887"/>
        <dbReference type="ChEBI" id="CHEBI:456215"/>
        <dbReference type="EC" id="6.3.1.13"/>
    </reaction>
</comment>
<comment type="cofactor">
    <cofactor evidence="1">
        <name>Zn(2+)</name>
        <dbReference type="ChEBI" id="CHEBI:29105"/>
    </cofactor>
    <text evidence="1">Binds 1 zinc ion per subunit.</text>
</comment>
<comment type="subunit">
    <text evidence="1">Monomer.</text>
</comment>
<comment type="similarity">
    <text evidence="1">Belongs to the class-I aminoacyl-tRNA synthetase family. MshC subfamily.</text>
</comment>
<sequence>MHAWPDPSVPVVAGTPVPLKLFDTADQRVKEVDTTPDANGEVGMYVCGITPYDSTHLGHAATYLTFDLAQRQLLANGHKVHYAQNITDVDDPLFERAERDGVDWRELGTSQINLFRSDMEILSVIPPRDYIGAMESVDEVIAMVQQLLDAGAAYELDQGDIYASIDATEQFGYESNLDRATMEEYFAERGGDPDREGKRDPLDALIWRGHREGEPAWDSPFGPGRPGWHVECSAIATNRLGSHFAIQGGGSDLAFPHHEFSAAHAEAALKVERMAGHYVHAGMIALDGVKMSKSLGNLVFVHKLSEAGHDPSAIRLAVFAGHYREDRDFSDAILAEAEERLTRWREQLAGEVSEAEATEVVDKLRAILADDLNTPEALSLLDGAAGDCNQIIATALDGLLGVRI</sequence>
<protein>
    <recommendedName>
        <fullName evidence="1">L-cysteine:1D-myo-inositol 2-amino-2-deoxy-alpha-D-glucopyranoside ligase 1</fullName>
        <shortName evidence="1">L-Cys:GlcN-Ins ligase 1</shortName>
        <ecNumber evidence="1">6.3.1.13</ecNumber>
    </recommendedName>
    <alternativeName>
        <fullName evidence="1">Mycothiol ligase 1</fullName>
        <shortName evidence="1">MSH ligase 1</shortName>
    </alternativeName>
</protein>
<reference key="1">
    <citation type="journal article" date="2005" name="J. Bacteriol.">
        <title>Complete genome sequence and analysis of the multiresistant nosocomial pathogen Corynebacterium jeikeium K411, a lipid-requiring bacterium of the human skin flora.</title>
        <authorList>
            <person name="Tauch A."/>
            <person name="Kaiser O."/>
            <person name="Hain T."/>
            <person name="Goesmann A."/>
            <person name="Weisshaar B."/>
            <person name="Albersmeier A."/>
            <person name="Bekel T."/>
            <person name="Bischoff N."/>
            <person name="Brune I."/>
            <person name="Chakraborty T."/>
            <person name="Kalinowski J."/>
            <person name="Meyer F."/>
            <person name="Rupp O."/>
            <person name="Schneiker S."/>
            <person name="Viehoever P."/>
            <person name="Puehler A."/>
        </authorList>
    </citation>
    <scope>NUCLEOTIDE SEQUENCE [LARGE SCALE GENOMIC DNA]</scope>
    <source>
        <strain>K411</strain>
    </source>
</reference>
<accession>Q4JXD7</accession>
<feature type="chain" id="PRO_0000400439" description="L-cysteine:1D-myo-inositol 2-amino-2-deoxy-alpha-D-glucopyranoside ligase 1">
    <location>
        <begin position="1"/>
        <end position="404"/>
    </location>
</feature>
<feature type="short sequence motif" description="'HIGH' region" evidence="1">
    <location>
        <begin position="49"/>
        <end position="59"/>
    </location>
</feature>
<feature type="short sequence motif" description="'ERGGDP' region" evidence="1">
    <location>
        <begin position="188"/>
        <end position="193"/>
    </location>
</feature>
<feature type="short sequence motif" description="'KMSKS' region" evidence="1">
    <location>
        <begin position="290"/>
        <end position="294"/>
    </location>
</feature>
<feature type="binding site" evidence="1">
    <location>
        <begin position="47"/>
        <end position="50"/>
    </location>
    <ligand>
        <name>L-cysteinyl-5'-AMP</name>
        <dbReference type="ChEBI" id="CHEBI:144924"/>
    </ligand>
</feature>
<feature type="binding site" evidence="1">
    <location>
        <position position="47"/>
    </location>
    <ligand>
        <name>Zn(2+)</name>
        <dbReference type="ChEBI" id="CHEBI:29105"/>
    </ligand>
</feature>
<feature type="binding site" evidence="1">
    <location>
        <position position="62"/>
    </location>
    <ligand>
        <name>L-cysteinyl-5'-AMP</name>
        <dbReference type="ChEBI" id="CHEBI:144924"/>
    </ligand>
</feature>
<feature type="binding site" evidence="1">
    <location>
        <begin position="85"/>
        <end position="87"/>
    </location>
    <ligand>
        <name>L-cysteinyl-5'-AMP</name>
        <dbReference type="ChEBI" id="CHEBI:144924"/>
    </ligand>
</feature>
<feature type="binding site" evidence="1">
    <location>
        <position position="228"/>
    </location>
    <ligand>
        <name>L-cysteinyl-5'-AMP</name>
        <dbReference type="ChEBI" id="CHEBI:144924"/>
    </ligand>
</feature>
<feature type="binding site" evidence="1">
    <location>
        <position position="232"/>
    </location>
    <ligand>
        <name>Zn(2+)</name>
        <dbReference type="ChEBI" id="CHEBI:29105"/>
    </ligand>
</feature>
<feature type="binding site" evidence="1">
    <location>
        <begin position="250"/>
        <end position="252"/>
    </location>
    <ligand>
        <name>L-cysteinyl-5'-AMP</name>
        <dbReference type="ChEBI" id="CHEBI:144924"/>
    </ligand>
</feature>
<feature type="binding site" evidence="1">
    <location>
        <position position="257"/>
    </location>
    <ligand>
        <name>Zn(2+)</name>
        <dbReference type="ChEBI" id="CHEBI:29105"/>
    </ligand>
</feature>
<feature type="binding site" evidence="1">
    <location>
        <position position="284"/>
    </location>
    <ligand>
        <name>L-cysteinyl-5'-AMP</name>
        <dbReference type="ChEBI" id="CHEBI:144924"/>
    </ligand>
</feature>
<name>MSHC1_CORJK</name>
<keyword id="KW-0067">ATP-binding</keyword>
<keyword id="KW-0436">Ligase</keyword>
<keyword id="KW-0479">Metal-binding</keyword>
<keyword id="KW-0547">Nucleotide-binding</keyword>
<keyword id="KW-1185">Reference proteome</keyword>
<keyword id="KW-0862">Zinc</keyword>
<organism>
    <name type="scientific">Corynebacterium jeikeium (strain K411)</name>
    <dbReference type="NCBI Taxonomy" id="306537"/>
    <lineage>
        <taxon>Bacteria</taxon>
        <taxon>Bacillati</taxon>
        <taxon>Actinomycetota</taxon>
        <taxon>Actinomycetes</taxon>
        <taxon>Mycobacteriales</taxon>
        <taxon>Corynebacteriaceae</taxon>
        <taxon>Corynebacterium</taxon>
    </lineage>
</organism>
<gene>
    <name evidence="1" type="primary">mshC1</name>
    <name type="ordered locus">jk0368</name>
</gene>
<evidence type="ECO:0000255" key="1">
    <source>
        <dbReference type="HAMAP-Rule" id="MF_01697"/>
    </source>
</evidence>
<proteinExistence type="inferred from homology"/>